<reference key="1">
    <citation type="journal article" date="2007" name="Nat. Biotechnol.">
        <title>Genome sequence of the lignocellulose-bioconverting and xylose-fermenting yeast Pichia stipitis.</title>
        <authorList>
            <person name="Jeffries T.W."/>
            <person name="Grigoriev I.V."/>
            <person name="Grimwood J."/>
            <person name="Laplaza J.M."/>
            <person name="Aerts A."/>
            <person name="Salamov A."/>
            <person name="Schmutz J."/>
            <person name="Lindquist E."/>
            <person name="Dehal P."/>
            <person name="Shapiro H."/>
            <person name="Jin Y.-S."/>
            <person name="Passoth V."/>
            <person name="Richardson P.M."/>
        </authorList>
    </citation>
    <scope>NUCLEOTIDE SEQUENCE [LARGE SCALE GENOMIC DNA]</scope>
    <source>
        <strain>ATCC 58785 / CBS 6054 / NBRC 10063 / NRRL Y-11545</strain>
    </source>
</reference>
<dbReference type="EMBL" id="CP000498">
    <property type="protein sequence ID" value="ABN66162.2"/>
    <property type="status" value="ALT_INIT"/>
    <property type="molecule type" value="Genomic_DNA"/>
</dbReference>
<dbReference type="RefSeq" id="XP_001384191.2">
    <property type="nucleotide sequence ID" value="XM_001384154.1"/>
</dbReference>
<dbReference type="SMR" id="A3LU10"/>
<dbReference type="FunCoup" id="A3LU10">
    <property type="interactions" value="822"/>
</dbReference>
<dbReference type="STRING" id="322104.A3LU10"/>
<dbReference type="GeneID" id="4838728"/>
<dbReference type="KEGG" id="pic:PICST_59113"/>
<dbReference type="eggNOG" id="KOG0218">
    <property type="taxonomic scope" value="Eukaryota"/>
</dbReference>
<dbReference type="HOGENOM" id="CLU_002472_0_0_1"/>
<dbReference type="InParanoid" id="A3LU10"/>
<dbReference type="OrthoDB" id="121051at2759"/>
<dbReference type="Proteomes" id="UP000002258">
    <property type="component" value="Chromosome 4"/>
</dbReference>
<dbReference type="GO" id="GO:0005634">
    <property type="term" value="C:nucleus"/>
    <property type="evidence" value="ECO:0007669"/>
    <property type="project" value="UniProtKB-SubCell"/>
</dbReference>
<dbReference type="GO" id="GO:0005524">
    <property type="term" value="F:ATP binding"/>
    <property type="evidence" value="ECO:0007669"/>
    <property type="project" value="UniProtKB-KW"/>
</dbReference>
<dbReference type="GO" id="GO:0140664">
    <property type="term" value="F:ATP-dependent DNA damage sensor activity"/>
    <property type="evidence" value="ECO:0007669"/>
    <property type="project" value="InterPro"/>
</dbReference>
<dbReference type="GO" id="GO:0030983">
    <property type="term" value="F:mismatched DNA binding"/>
    <property type="evidence" value="ECO:0007669"/>
    <property type="project" value="InterPro"/>
</dbReference>
<dbReference type="GO" id="GO:0006298">
    <property type="term" value="P:mismatch repair"/>
    <property type="evidence" value="ECO:0007669"/>
    <property type="project" value="InterPro"/>
</dbReference>
<dbReference type="GO" id="GO:0006312">
    <property type="term" value="P:mitotic recombination"/>
    <property type="evidence" value="ECO:0007669"/>
    <property type="project" value="TreeGrafter"/>
</dbReference>
<dbReference type="FunFam" id="3.40.50.300:FF:000870">
    <property type="entry name" value="MutS protein homolog 4"/>
    <property type="match status" value="1"/>
</dbReference>
<dbReference type="Gene3D" id="1.10.1420.10">
    <property type="match status" value="2"/>
</dbReference>
<dbReference type="Gene3D" id="3.40.1170.10">
    <property type="entry name" value="DNA repair protein MutS, domain I"/>
    <property type="match status" value="1"/>
</dbReference>
<dbReference type="Gene3D" id="3.30.420.110">
    <property type="entry name" value="MutS, connector domain"/>
    <property type="match status" value="1"/>
</dbReference>
<dbReference type="Gene3D" id="3.40.50.300">
    <property type="entry name" value="P-loop containing nucleotide triphosphate hydrolases"/>
    <property type="match status" value="1"/>
</dbReference>
<dbReference type="InterPro" id="IPR007695">
    <property type="entry name" value="DNA_mismatch_repair_MutS-lik_N"/>
</dbReference>
<dbReference type="InterPro" id="IPR017261">
    <property type="entry name" value="DNA_mismatch_repair_MutS/MSH"/>
</dbReference>
<dbReference type="InterPro" id="IPR000432">
    <property type="entry name" value="DNA_mismatch_repair_MutS_C"/>
</dbReference>
<dbReference type="InterPro" id="IPR007696">
    <property type="entry name" value="DNA_mismatch_repair_MutS_core"/>
</dbReference>
<dbReference type="InterPro" id="IPR016151">
    <property type="entry name" value="DNA_mismatch_repair_MutS_N"/>
</dbReference>
<dbReference type="InterPro" id="IPR036187">
    <property type="entry name" value="DNA_mismatch_repair_MutS_sf"/>
</dbReference>
<dbReference type="InterPro" id="IPR007860">
    <property type="entry name" value="DNA_mmatch_repair_MutS_con_dom"/>
</dbReference>
<dbReference type="InterPro" id="IPR045076">
    <property type="entry name" value="MutS"/>
</dbReference>
<dbReference type="InterPro" id="IPR036678">
    <property type="entry name" value="MutS_con_dom_sf"/>
</dbReference>
<dbReference type="InterPro" id="IPR027417">
    <property type="entry name" value="P-loop_NTPase"/>
</dbReference>
<dbReference type="PANTHER" id="PTHR11361:SF122">
    <property type="entry name" value="DNA MISMATCH REPAIR PROTEIN MSH3"/>
    <property type="match status" value="1"/>
</dbReference>
<dbReference type="PANTHER" id="PTHR11361">
    <property type="entry name" value="DNA MISMATCH REPAIR PROTEIN MUTS FAMILY MEMBER"/>
    <property type="match status" value="1"/>
</dbReference>
<dbReference type="Pfam" id="PF01624">
    <property type="entry name" value="MutS_I"/>
    <property type="match status" value="1"/>
</dbReference>
<dbReference type="Pfam" id="PF05188">
    <property type="entry name" value="MutS_II"/>
    <property type="match status" value="1"/>
</dbReference>
<dbReference type="Pfam" id="PF05192">
    <property type="entry name" value="MutS_III"/>
    <property type="match status" value="1"/>
</dbReference>
<dbReference type="Pfam" id="PF00488">
    <property type="entry name" value="MutS_V"/>
    <property type="match status" value="1"/>
</dbReference>
<dbReference type="PIRSF" id="PIRSF037677">
    <property type="entry name" value="DNA_mis_repair_Msh6"/>
    <property type="match status" value="1"/>
</dbReference>
<dbReference type="SMART" id="SM00534">
    <property type="entry name" value="MUTSac"/>
    <property type="match status" value="1"/>
</dbReference>
<dbReference type="SMART" id="SM00533">
    <property type="entry name" value="MUTSd"/>
    <property type="match status" value="1"/>
</dbReference>
<dbReference type="SUPFAM" id="SSF55271">
    <property type="entry name" value="DNA repair protein MutS, domain I"/>
    <property type="match status" value="1"/>
</dbReference>
<dbReference type="SUPFAM" id="SSF48334">
    <property type="entry name" value="DNA repair protein MutS, domain III"/>
    <property type="match status" value="1"/>
</dbReference>
<dbReference type="SUPFAM" id="SSF52540">
    <property type="entry name" value="P-loop containing nucleoside triphosphate hydrolases"/>
    <property type="match status" value="1"/>
</dbReference>
<dbReference type="PROSITE" id="PS00486">
    <property type="entry name" value="DNA_MISMATCH_REPAIR_2"/>
    <property type="match status" value="1"/>
</dbReference>
<sequence>MSYRSKQASISRFFKSTKSNNSAKNEPAVQHIPKKTGVMLKFSYNNKENVVEGGKDTEGPHIVGSHVELPGQSVNSVVNSDSIVVNSNLEIDPKISSVLKRKPDIDIQLKTTKKRSKTLTPLEKQIRELRESHKDKVLVIQIGYKYKMFGDDAKLGSKILDIMYIRGGDDGTRDEFSYCSFPDFKLHINLKRLLTHGLKIGVVKQLESAIVKTVEKSSKSSDLMKREITGVYTRGTYMGDEYVQSSGNSADTESPYYIICINEINQKELSMVAVQPKTGDIVQDTFKDGLNRDELETRLMYLNPSEVIVLSSEQPSVETLKTIRLVASDVQLLPRKRKGEDEVFNGLIEFFDSIDNGKYKHLGDYFSVNFSKHIQSCFYELINYLSEFKLSNVFTIPDNISNFTNSRKYMVLPNNTLYALEIFQNYTNPASQKGTLIWLLNHTRTRFGNRLLNKWVSKPLIEKEKIEERLLAIEDLTGDFNNVVDALKIQLDKMGKSLDLEELLMKTHYAATYNLDKINRRDIYNMLDCFQSVLESMNRFEKGITEFSKTKKSPLLTNILLELSEMSKTTVVSNLLNKINRSYVMNESKDPEEQVTQFFNLDNHNWEDIRSEFSELDKIEKLFEEELLNIRRVLKRPQLQYITNNKEPYLIEVRNGKQVDELPTDFHRINGTTTVSRFRSERTAQLYIKKQYHKEKLLVNCNVAFNDFLKEIDEQYEFFSKIVKNLSVFDCLLSLTAASLASKNTRPILVDQQLIEVQKGRNPIIESLHNRNDYVPNDIDICYDNKVLIITGPNMGGKSSYVKQVALLVIMSQIGCYIPCDRATLGVFDSIFIRMGASDNILKGNSTFMNEMLECSNIIHGISNKSLVILDEIGRGTGTSDGIALAYSILRYLIESPLRPLVLFITHYPSLHVLEDSFPTVVTNYHMGFQQIHKDDNDFPEIIFLYNLVKGVINNSYGLNVAKLAGLPVSVISGAHRVSESLKYKVEIQQKEQFTMKFGSILQMLKKDEINSNNILELENLFSYI</sequence>
<gene>
    <name type="primary">MSH3</name>
    <name type="ORF">PICST_59113</name>
</gene>
<feature type="chain" id="PRO_0000338529" description="DNA mismatch repair protein MSH3">
    <location>
        <begin position="1"/>
        <end position="1025"/>
    </location>
</feature>
<feature type="region of interest" description="Disordered" evidence="3">
    <location>
        <begin position="1"/>
        <end position="28"/>
    </location>
</feature>
<feature type="region of interest" description="Mispair-binding domain" evidence="1">
    <location>
        <begin position="114"/>
        <end position="235"/>
    </location>
</feature>
<feature type="compositionally biased region" description="Polar residues" evidence="3">
    <location>
        <begin position="1"/>
        <end position="24"/>
    </location>
</feature>
<feature type="binding site" evidence="2">
    <location>
        <begin position="792"/>
        <end position="799"/>
    </location>
    <ligand>
        <name>ATP</name>
        <dbReference type="ChEBI" id="CHEBI:30616"/>
    </ligand>
</feature>
<accession>A3LU10</accession>
<proteinExistence type="inferred from homology"/>
<organism>
    <name type="scientific">Scheffersomyces stipitis (strain ATCC 58785 / CBS 6054 / NBRC 10063 / NRRL Y-11545)</name>
    <name type="common">Yeast</name>
    <name type="synonym">Pichia stipitis</name>
    <dbReference type="NCBI Taxonomy" id="322104"/>
    <lineage>
        <taxon>Eukaryota</taxon>
        <taxon>Fungi</taxon>
        <taxon>Dikarya</taxon>
        <taxon>Ascomycota</taxon>
        <taxon>Saccharomycotina</taxon>
        <taxon>Pichiomycetes</taxon>
        <taxon>Debaryomycetaceae</taxon>
        <taxon>Scheffersomyces</taxon>
    </lineage>
</organism>
<comment type="function">
    <text evidence="1">Component of the post-replicative DNA mismatch repair system (MMR). Heterodimerizes with MSH2 to form MutS beta, which binds to DNA mismatches thereby initiating DNA repair. MSH3 provides substrate-binding and substrate specificity to the complex. When bound, the MutS beta heterodimer bends the DNA helix and shields approximately 20 base pairs. Acts mainly to repair insertion-deletion loops (IDLs) from 2 to 13 nucleotides in size, but can also repair base-base and single insertion-deletion mismatches that occur during replication. After mismatch binding, forms a ternary complex with the MutL alpha heterodimer, which is thought to be responsible for directing the downstream MMR events, including strand discrimination, excision, and resynthesis. ATP binding and hydrolysis play a pivotal role in mismatch repair functions (By similarity).</text>
</comment>
<comment type="subunit">
    <text evidence="1">Heterodimer consisting of MSH2-MSH3 (MutS beta). Forms a ternary complex with MutL alpha (MLH1-PMS1) (By similarity).</text>
</comment>
<comment type="subcellular location">
    <subcellularLocation>
        <location evidence="1">Nucleus</location>
    </subcellularLocation>
</comment>
<comment type="similarity">
    <text evidence="4">Belongs to the DNA mismatch repair MutS family. MSH3 subfamily.</text>
</comment>
<comment type="sequence caution" evidence="4">
    <conflict type="erroneous initiation">
        <sequence resource="EMBL-CDS" id="ABN66162"/>
    </conflict>
</comment>
<protein>
    <recommendedName>
        <fullName>DNA mismatch repair protein MSH3</fullName>
    </recommendedName>
    <alternativeName>
        <fullName>MutS protein homolog 3</fullName>
    </alternativeName>
</protein>
<name>MSH3_PICST</name>
<keyword id="KW-0067">ATP-binding</keyword>
<keyword id="KW-0227">DNA damage</keyword>
<keyword id="KW-0234">DNA repair</keyword>
<keyword id="KW-0238">DNA-binding</keyword>
<keyword id="KW-0547">Nucleotide-binding</keyword>
<keyword id="KW-0539">Nucleus</keyword>
<keyword id="KW-1185">Reference proteome</keyword>
<evidence type="ECO:0000250" key="1"/>
<evidence type="ECO:0000255" key="2"/>
<evidence type="ECO:0000256" key="3">
    <source>
        <dbReference type="SAM" id="MobiDB-lite"/>
    </source>
</evidence>
<evidence type="ECO:0000305" key="4"/>